<comment type="function">
    <molecule>Gasdermin bGSDM</molecule>
    <text evidence="1 3 4">Precursor of a pore-forming protein involved in defense against bacteriophages (By similarity). Expression of bGSDM and the neighboring protease gene (Ga0098714_109514) is toxic in E.coli on solid medium (PubMed:35025633). Cleavage of this precursor by its dedicated protease releases the active moiety (gasdermin bGSDM, N-terminus) which inserts into membranes, forming pores and triggering cell death (By similarity).</text>
</comment>
<comment type="function">
    <molecule>Gasdermin bGSDM, N-terminus</molecule>
    <text evidence="3">Pore-forming protein that causes membrane permeabilization via a pyroptosis-like activity. Makes ring-like pores when released.</text>
</comment>
<comment type="activity regulation">
    <molecule>Gasdermin bGSDM</molecule>
    <text evidence="3 7">The full-length protein before cleavage is inactive: intramolecular interactions between the N-terminal domain and the C-terminal region as well as the lipid modification, mediate autoinhibition (Probable). The pyroptosis-like-inducing activity is carried by the released N-terminal domain (Gasdermin bGSDM, N-terminus) (By similarity).</text>
</comment>
<comment type="subunit">
    <molecule>Gasdermin bGSDM</molecule>
    <text evidence="4">Monomer in solution.</text>
</comment>
<comment type="subunit">
    <molecule>Gasdermin bGSDM, N-terminus</molecule>
    <text evidence="2">Forms large, homooligomeric ring-shaped pores when inserted in membranes.</text>
</comment>
<comment type="subcellular location">
    <molecule>Gasdermin bGSDM</molecule>
    <subcellularLocation>
        <location evidence="7">Cytoplasm</location>
    </subcellularLocation>
</comment>
<comment type="subcellular location">
    <molecule>Gasdermin bGSDM, N-terminus</molecule>
    <subcellularLocation>
        <location evidence="3">Cell inner membrane</location>
        <topology evidence="6">Multi-pass membrane protein</topology>
    </subcellularLocation>
</comment>
<comment type="domain">
    <text evidence="4">The N-terminus has marked structural similarity to the mammalian gasdermin N-terminal domain. The C-terminal region wraps around the twisted beta sheet core, probably stabilizing the inactive state.</text>
</comment>
<comment type="domain">
    <text evidence="2">The beta-stranded transmembrane 'fingers' of the active protein form by local refolding of several alpha helices found only in the inactive state. Reorientation of the N-terminus probably flips the palmitoyl moiety for insertion into the membrane.</text>
</comment>
<comment type="PTM">
    <text evidence="2 4">Palmitoylation helps stabilize the inactive state; may self palmitoylate (PubMed:35025633). Palmitoylation plays a significant role in pore formation (By similarity).</text>
</comment>
<comment type="mass spectrometry">
    <text>Full-length, unmodified protein expressed in E.coli.</text>
</comment>
<comment type="mass spectrometry">
    <text>Full-length, palmitoylated protein expressed in E.coli.</text>
</comment>
<comment type="mass spectrometry">
    <text>Full-length, modified protein expressed in E.coli.</text>
</comment>
<comment type="similarity">
    <text evidence="4">Belongs to the bacterial gasdermin family.</text>
</comment>
<sequence>MNCSRDTGDELMAALLAEGINLILPPRDNIAPGDLIIADPQGGARLGGWHEVFNLQLSPEVATDPGFKSFQFRASSILQVGVAASVMGRVLQALGLGSGSFSSAFSSSNADTIQLSIVAPANKELTNFDAVLVQMNEAKAEPAQGYTDRNFFVVTKVWRARGIRISVADKSKKQVDLSAKAVEELTAKAKMELKREDTGSYAFLAASQLIFGLTLREVTYKDGAIVDVAPTGPLKFRGKGPGDPFAFIGDDAFVDLPES</sequence>
<protein>
    <recommendedName>
        <fullName evidence="6">Gasdermin bGSDM</fullName>
        <shortName evidence="5">bGSDM</shortName>
    </recommendedName>
    <alternativeName>
        <fullName evidence="5">Bacterial gasdermin</fullName>
    </alternativeName>
    <component>
        <recommendedName>
            <fullName evidence="6">Gasdermin bGSDM, N-terminus</fullName>
        </recommendedName>
    </component>
</protein>
<name>GSDM_BRATP</name>
<accession>P0DV46</accession>
<proteinExistence type="evidence at protein level"/>
<keyword id="KW-0002">3D-structure</keyword>
<keyword id="KW-0051">Antiviral defense</keyword>
<keyword id="KW-0997">Cell inner membrane</keyword>
<keyword id="KW-1003">Cell membrane</keyword>
<keyword id="KW-0963">Cytoplasm</keyword>
<keyword id="KW-0449">Lipoprotein</keyword>
<keyword id="KW-0472">Membrane</keyword>
<keyword id="KW-0564">Palmitate</keyword>
<keyword id="KW-0812">Transmembrane</keyword>
<keyword id="KW-1134">Transmembrane beta strand</keyword>
<organism>
    <name type="scientific">Bradyrhizobium tropiciagri</name>
    <dbReference type="NCBI Taxonomy" id="312253"/>
    <lineage>
        <taxon>Bacteria</taxon>
        <taxon>Pseudomonadati</taxon>
        <taxon>Pseudomonadota</taxon>
        <taxon>Alphaproteobacteria</taxon>
        <taxon>Hyphomicrobiales</taxon>
        <taxon>Nitrobacteraceae</taxon>
        <taxon>Bradyrhizobium</taxon>
    </lineage>
</organism>
<evidence type="ECO:0000250" key="1">
    <source>
        <dbReference type="UniProtKB" id="A0A0S2DNG5"/>
    </source>
</evidence>
<evidence type="ECO:0000250" key="2">
    <source>
        <dbReference type="UniProtKB" id="A0A2T4VDM4"/>
    </source>
</evidence>
<evidence type="ECO:0000250" key="3">
    <source>
        <dbReference type="UniProtKB" id="P0DV48"/>
    </source>
</evidence>
<evidence type="ECO:0000269" key="4">
    <source>
    </source>
</evidence>
<evidence type="ECO:0000303" key="5">
    <source>
    </source>
</evidence>
<evidence type="ECO:0000305" key="6"/>
<evidence type="ECO:0000305" key="7">
    <source>
    </source>
</evidence>
<evidence type="ECO:0007744" key="8">
    <source>
        <dbReference type="PDB" id="7N50"/>
    </source>
</evidence>
<feature type="chain" id="PRO_0000455564" description="Gasdermin bGSDM">
    <location>
        <begin position="1"/>
        <end position="259"/>
    </location>
</feature>
<feature type="chain" id="PRO_0000455565" description="Gasdermin bGSDM, N-terminus" evidence="7">
    <location>
        <begin position="1"/>
        <end status="unknown"/>
    </location>
</feature>
<feature type="transmembrane region" description="Beta stranded" evidence="2">
    <location>
        <begin position="70"/>
        <end position="86"/>
    </location>
</feature>
<feature type="transmembrane region" description="Beta stranded" evidence="2">
    <location>
        <begin position="98"/>
        <end position="116"/>
    </location>
</feature>
<feature type="transmembrane region" description="Beta stranded" evidence="2">
    <location>
        <begin position="162"/>
        <end position="179"/>
    </location>
</feature>
<feature type="transmembrane region" description="Beta stranded" evidence="2">
    <location>
        <begin position="187"/>
        <end position="203"/>
    </location>
</feature>
<feature type="region of interest" description="C-terminal region" evidence="4">
    <location>
        <begin position="244"/>
        <end position="259"/>
    </location>
</feature>
<feature type="lipid moiety-binding region" description="S-palmitoyl cysteine" evidence="4">
    <location>
        <position position="3"/>
    </location>
</feature>
<feature type="mutagenesis site" description="Not cleaved by Runella protease." evidence="4">
    <original>LKFRGKGP</original>
    <variation>NRVLGENM</variation>
    <location>
        <begin position="234"/>
        <end position="241"/>
    </location>
</feature>
<feature type="mutagenesis site" description="Increased cell growth arrest upon induction." evidence="4">
    <location>
        <begin position="238"/>
        <end position="259"/>
    </location>
</feature>
<reference key="1">
    <citation type="journal article" date="2015" name="Genome Announc.">
        <title>Genome Sequence of Bradyrhizobium tropiciagri Strain CNPSo 1112T, Isolated from a Root Nodule of Neonotonia wightii.</title>
        <authorList>
            <person name="Delamuta J.R."/>
            <person name="Gomes D.F."/>
            <person name="Ribeiro R.A."/>
            <person name="Chueire L.M."/>
            <person name="Souza R.C."/>
            <person name="Almeida L.G."/>
            <person name="Vasconcelos A.T."/>
            <person name="Hungria M."/>
        </authorList>
    </citation>
    <scope>NUCLEOTIDE SEQUENCE [LARGE SCALE GENOMIC DNA]</scope>
    <source>
        <strain>LMG 28867 / SMS 303 / BR 1009 / SEMIA 6148 / CNPSo 1112</strain>
    </source>
</reference>
<reference evidence="8" key="2">
    <citation type="journal article" date="2022" name="Science">
        <title>Bacterial gasdermins reveal an ancient mechanism of cell death.</title>
        <authorList>
            <person name="Johnson A.G."/>
            <person name="Wein T."/>
            <person name="Mayer M.L."/>
            <person name="Duncan-Lowey B."/>
            <person name="Yirmiya E."/>
            <person name="Oppenheimer-Shaanan Y."/>
            <person name="Amitai G."/>
            <person name="Sorek R."/>
            <person name="Kranzusch P.J."/>
        </authorList>
    </citation>
    <scope>X-RAY CRYSTALLOGRAPHY (1.50 ANGSTROMS) OF 2-259</scope>
    <scope>FUNCTION</scope>
    <scope>SUBUNIT</scope>
    <scope>DOMAIN</scope>
    <scope>MASS SPECTROMETRY</scope>
    <scope>PALMITOYLATION AT CYS-3</scope>
    <scope>MUTAGENESIS OF 234-LEU--PRO-241 AND 238-GLY--SER-259</scope>
    <source>
        <strain>LMG 28867 / SMS 303 / BR 1009 / SEMIA 6148 / CNPSo 1112</strain>
    </source>
</reference>
<dbReference type="EMBL" id="LFLZ01000095">
    <property type="status" value="NOT_ANNOTATED_CDS"/>
    <property type="molecule type" value="Genomic_DNA"/>
</dbReference>
<dbReference type="PDB" id="7N50">
    <property type="method" value="X-ray"/>
    <property type="resolution" value="1.67 A"/>
    <property type="chains" value="A=2-259"/>
</dbReference>
<dbReference type="PDBsum" id="7N50"/>
<dbReference type="SMR" id="P0DV46"/>
<dbReference type="TCDB" id="1.C.137.1.1">
    <property type="family name" value="the bacterial gasdermin (b-gas) family"/>
</dbReference>
<dbReference type="GO" id="GO:0005737">
    <property type="term" value="C:cytoplasm"/>
    <property type="evidence" value="ECO:0007669"/>
    <property type="project" value="UniProtKB-SubCell"/>
</dbReference>
<dbReference type="GO" id="GO:0005886">
    <property type="term" value="C:plasma membrane"/>
    <property type="evidence" value="ECO:0007669"/>
    <property type="project" value="UniProtKB-SubCell"/>
</dbReference>
<dbReference type="GO" id="GO:0051607">
    <property type="term" value="P:defense response to virus"/>
    <property type="evidence" value="ECO:0007669"/>
    <property type="project" value="UniProtKB-KW"/>
</dbReference>
<gene>
    <name evidence="5" type="ORF">Ga0098714_109513</name>
</gene>